<comment type="function">
    <text evidence="4">Component of the transition zone in primary cilia. Required for ciliogenesis.</text>
</comment>
<comment type="subcellular location">
    <subcellularLocation>
        <location evidence="5">Membrane</location>
        <topology evidence="5">Multi-pass membrane protein</topology>
    </subcellularLocation>
    <subcellularLocation>
        <location evidence="1">Cell projection</location>
        <location evidence="1">Cilium</location>
    </subcellularLocation>
    <text evidence="1">Localizes to the transition zone.</text>
</comment>
<comment type="disruption phenotype">
    <text evidence="4">Fishes lacking both tmem237a and tmem237b display defects in midsomitic embryos, including shortening of the anterior-posterior axis and small anterior structures, kinking of the notochord, and broadening and thinning of the somite.</text>
</comment>
<comment type="similarity">
    <text evidence="5">Belongs to the TMEM237 family.</text>
</comment>
<keyword id="KW-0966">Cell projection</keyword>
<keyword id="KW-0969">Cilium</keyword>
<keyword id="KW-0970">Cilium biogenesis/degradation</keyword>
<keyword id="KW-0472">Membrane</keyword>
<keyword id="KW-1185">Reference proteome</keyword>
<keyword id="KW-0812">Transmembrane</keyword>
<keyword id="KW-1133">Transmembrane helix</keyword>
<protein>
    <recommendedName>
        <fullName>Transmembrane protein 237A</fullName>
    </recommendedName>
    <alternativeName>
        <fullName>Amyotrophic lateral sclerosis 2 chromosomal region candidate gene 4 protein homolog A</fullName>
    </alternativeName>
</protein>
<proteinExistence type="inferred from homology"/>
<evidence type="ECO:0000250" key="1"/>
<evidence type="ECO:0000255" key="2"/>
<evidence type="ECO:0000256" key="3">
    <source>
        <dbReference type="SAM" id="MobiDB-lite"/>
    </source>
</evidence>
<evidence type="ECO:0000269" key="4">
    <source>
    </source>
</evidence>
<evidence type="ECO:0000305" key="5"/>
<organism>
    <name type="scientific">Danio rerio</name>
    <name type="common">Zebrafish</name>
    <name type="synonym">Brachydanio rerio</name>
    <dbReference type="NCBI Taxonomy" id="7955"/>
    <lineage>
        <taxon>Eukaryota</taxon>
        <taxon>Metazoa</taxon>
        <taxon>Chordata</taxon>
        <taxon>Craniata</taxon>
        <taxon>Vertebrata</taxon>
        <taxon>Euteleostomi</taxon>
        <taxon>Actinopterygii</taxon>
        <taxon>Neopterygii</taxon>
        <taxon>Teleostei</taxon>
        <taxon>Ostariophysi</taxon>
        <taxon>Cypriniformes</taxon>
        <taxon>Danionidae</taxon>
        <taxon>Danioninae</taxon>
        <taxon>Danio</taxon>
    </lineage>
</organism>
<dbReference type="EMBL" id="BX571704">
    <property type="status" value="NOT_ANNOTATED_CDS"/>
    <property type="molecule type" value="Genomic_DNA"/>
</dbReference>
<dbReference type="RefSeq" id="NP_001306065.1">
    <property type="nucleotide sequence ID" value="NM_001319136.1"/>
</dbReference>
<dbReference type="FunCoup" id="F1Q930">
    <property type="interactions" value="978"/>
</dbReference>
<dbReference type="STRING" id="7955.ENSDARP00000007797"/>
<dbReference type="PaxDb" id="7955-ENSDARP00000007797"/>
<dbReference type="Ensembl" id="ENSDART00000017593">
    <property type="protein sequence ID" value="ENSDARP00000007797"/>
    <property type="gene ID" value="ENSDARG00000041735"/>
</dbReference>
<dbReference type="GeneID" id="557237"/>
<dbReference type="KEGG" id="dre:557237"/>
<dbReference type="AGR" id="ZFIN:ZDB-GENE-070402-3"/>
<dbReference type="CTD" id="557237"/>
<dbReference type="ZFIN" id="ZDB-GENE-070402-3">
    <property type="gene designation" value="tmem237a"/>
</dbReference>
<dbReference type="eggNOG" id="ENOG502QTW0">
    <property type="taxonomic scope" value="Eukaryota"/>
</dbReference>
<dbReference type="HOGENOM" id="CLU_061097_0_0_1"/>
<dbReference type="InParanoid" id="F1Q930"/>
<dbReference type="OMA" id="CAVWNVV"/>
<dbReference type="OrthoDB" id="550113at2759"/>
<dbReference type="PhylomeDB" id="F1Q930"/>
<dbReference type="TreeFam" id="TF329703"/>
<dbReference type="PRO" id="PR:F1Q930"/>
<dbReference type="Proteomes" id="UP000000437">
    <property type="component" value="Alternate scaffold 9"/>
</dbReference>
<dbReference type="Proteomes" id="UP000000437">
    <property type="component" value="Chromosome 9"/>
</dbReference>
<dbReference type="Bgee" id="ENSDARG00000041735">
    <property type="expression patterns" value="Expressed in retina and 12 other cell types or tissues"/>
</dbReference>
<dbReference type="ExpressionAtlas" id="F1Q930">
    <property type="expression patterns" value="differential"/>
</dbReference>
<dbReference type="GO" id="GO:0035869">
    <property type="term" value="C:ciliary transition zone"/>
    <property type="evidence" value="ECO:0000250"/>
    <property type="project" value="UniProtKB"/>
</dbReference>
<dbReference type="GO" id="GO:0016020">
    <property type="term" value="C:membrane"/>
    <property type="evidence" value="ECO:0007669"/>
    <property type="project" value="UniProtKB-SubCell"/>
</dbReference>
<dbReference type="GO" id="GO:0060271">
    <property type="term" value="P:cilium assembly"/>
    <property type="evidence" value="ECO:0000250"/>
    <property type="project" value="UniProtKB"/>
</dbReference>
<dbReference type="GO" id="GO:0060027">
    <property type="term" value="P:convergent extension involved in gastrulation"/>
    <property type="evidence" value="ECO:0000316"/>
    <property type="project" value="ZFIN"/>
</dbReference>
<dbReference type="GO" id="GO:0030111">
    <property type="term" value="P:regulation of Wnt signaling pathway"/>
    <property type="evidence" value="ECO:0000250"/>
    <property type="project" value="UniProtKB"/>
</dbReference>
<dbReference type="InterPro" id="IPR029409">
    <property type="entry name" value="TMEM237"/>
</dbReference>
<dbReference type="PANTHER" id="PTHR28388">
    <property type="entry name" value="TRANSMEMBRANE PROTEIN 237"/>
    <property type="match status" value="1"/>
</dbReference>
<dbReference type="PANTHER" id="PTHR28388:SF1">
    <property type="entry name" value="TRANSMEMBRANE PROTEIN 237"/>
    <property type="match status" value="1"/>
</dbReference>
<dbReference type="Pfam" id="PF15383">
    <property type="entry name" value="TMEM237"/>
    <property type="match status" value="1"/>
</dbReference>
<accession>F1Q930</accession>
<sequence>MCVTSRADKMPSVKPKKKKIKKEINEVEEPEAGPEPAIEMEGLESRRQSESREPLTPEPHDNPPLKKKKKKKTHTFENEGEQQDHPNGDVQESPTDGEEVTKKSKKKRKNKMMENQSHNELGVEEDDIITDVHAPISQRSLFSAPLSHSHPIGKVFVEKNRRFQATDLSHDHLEEYMEVRPMWNTRDVAMRVHSGFRIIGLFSHGFLAGYAVWNIIVVYVLAGEQMTTLPNLLQQYHSLAYPAQSLLYLLLAISTVSAFDRVNLAKASMALRGFLTLDPAALASFLYFAALILSLSQQMTSDRIHLYPTANETLWPPGLEHQILQPWIVVNLVVALLVGLAWVFVATRPDMDYTEEFLMAMEVEEYPRHDDKHELAA</sequence>
<gene>
    <name type="primary">tmem237a</name>
    <name type="synonym">als2cr4a</name>
</gene>
<reference key="1">
    <citation type="journal article" date="2013" name="Nature">
        <title>The zebrafish reference genome sequence and its relationship to the human genome.</title>
        <authorList>
            <person name="Howe K."/>
            <person name="Clark M.D."/>
            <person name="Torroja C.F."/>
            <person name="Torrance J."/>
            <person name="Berthelot C."/>
            <person name="Muffato M."/>
            <person name="Collins J.E."/>
            <person name="Humphray S."/>
            <person name="McLaren K."/>
            <person name="Matthews L."/>
            <person name="McLaren S."/>
            <person name="Sealy I."/>
            <person name="Caccamo M."/>
            <person name="Churcher C."/>
            <person name="Scott C."/>
            <person name="Barrett J.C."/>
            <person name="Koch R."/>
            <person name="Rauch G.J."/>
            <person name="White S."/>
            <person name="Chow W."/>
            <person name="Kilian B."/>
            <person name="Quintais L.T."/>
            <person name="Guerra-Assuncao J.A."/>
            <person name="Zhou Y."/>
            <person name="Gu Y."/>
            <person name="Yen J."/>
            <person name="Vogel J.H."/>
            <person name="Eyre T."/>
            <person name="Redmond S."/>
            <person name="Banerjee R."/>
            <person name="Chi J."/>
            <person name="Fu B."/>
            <person name="Langley E."/>
            <person name="Maguire S.F."/>
            <person name="Laird G.K."/>
            <person name="Lloyd D."/>
            <person name="Kenyon E."/>
            <person name="Donaldson S."/>
            <person name="Sehra H."/>
            <person name="Almeida-King J."/>
            <person name="Loveland J."/>
            <person name="Trevanion S."/>
            <person name="Jones M."/>
            <person name="Quail M."/>
            <person name="Willey D."/>
            <person name="Hunt A."/>
            <person name="Burton J."/>
            <person name="Sims S."/>
            <person name="McLay K."/>
            <person name="Plumb B."/>
            <person name="Davis J."/>
            <person name="Clee C."/>
            <person name="Oliver K."/>
            <person name="Clark R."/>
            <person name="Riddle C."/>
            <person name="Elliot D."/>
            <person name="Threadgold G."/>
            <person name="Harden G."/>
            <person name="Ware D."/>
            <person name="Begum S."/>
            <person name="Mortimore B."/>
            <person name="Kerry G."/>
            <person name="Heath P."/>
            <person name="Phillimore B."/>
            <person name="Tracey A."/>
            <person name="Corby N."/>
            <person name="Dunn M."/>
            <person name="Johnson C."/>
            <person name="Wood J."/>
            <person name="Clark S."/>
            <person name="Pelan S."/>
            <person name="Griffiths G."/>
            <person name="Smith M."/>
            <person name="Glithero R."/>
            <person name="Howden P."/>
            <person name="Barker N."/>
            <person name="Lloyd C."/>
            <person name="Stevens C."/>
            <person name="Harley J."/>
            <person name="Holt K."/>
            <person name="Panagiotidis G."/>
            <person name="Lovell J."/>
            <person name="Beasley H."/>
            <person name="Henderson C."/>
            <person name="Gordon D."/>
            <person name="Auger K."/>
            <person name="Wright D."/>
            <person name="Collins J."/>
            <person name="Raisen C."/>
            <person name="Dyer L."/>
            <person name="Leung K."/>
            <person name="Robertson L."/>
            <person name="Ambridge K."/>
            <person name="Leongamornlert D."/>
            <person name="McGuire S."/>
            <person name="Gilderthorp R."/>
            <person name="Griffiths C."/>
            <person name="Manthravadi D."/>
            <person name="Nichol S."/>
            <person name="Barker G."/>
            <person name="Whitehead S."/>
            <person name="Kay M."/>
            <person name="Brown J."/>
            <person name="Murnane C."/>
            <person name="Gray E."/>
            <person name="Humphries M."/>
            <person name="Sycamore N."/>
            <person name="Barker D."/>
            <person name="Saunders D."/>
            <person name="Wallis J."/>
            <person name="Babbage A."/>
            <person name="Hammond S."/>
            <person name="Mashreghi-Mohammadi M."/>
            <person name="Barr L."/>
            <person name="Martin S."/>
            <person name="Wray P."/>
            <person name="Ellington A."/>
            <person name="Matthews N."/>
            <person name="Ellwood M."/>
            <person name="Woodmansey R."/>
            <person name="Clark G."/>
            <person name="Cooper J."/>
            <person name="Tromans A."/>
            <person name="Grafham D."/>
            <person name="Skuce C."/>
            <person name="Pandian R."/>
            <person name="Andrews R."/>
            <person name="Harrison E."/>
            <person name="Kimberley A."/>
            <person name="Garnett J."/>
            <person name="Fosker N."/>
            <person name="Hall R."/>
            <person name="Garner P."/>
            <person name="Kelly D."/>
            <person name="Bird C."/>
            <person name="Palmer S."/>
            <person name="Gehring I."/>
            <person name="Berger A."/>
            <person name="Dooley C.M."/>
            <person name="Ersan-Urun Z."/>
            <person name="Eser C."/>
            <person name="Geiger H."/>
            <person name="Geisler M."/>
            <person name="Karotki L."/>
            <person name="Kirn A."/>
            <person name="Konantz J."/>
            <person name="Konantz M."/>
            <person name="Oberlander M."/>
            <person name="Rudolph-Geiger S."/>
            <person name="Teucke M."/>
            <person name="Lanz C."/>
            <person name="Raddatz G."/>
            <person name="Osoegawa K."/>
            <person name="Zhu B."/>
            <person name="Rapp A."/>
            <person name="Widaa S."/>
            <person name="Langford C."/>
            <person name="Yang F."/>
            <person name="Schuster S.C."/>
            <person name="Carter N.P."/>
            <person name="Harrow J."/>
            <person name="Ning Z."/>
            <person name="Herrero J."/>
            <person name="Searle S.M."/>
            <person name="Enright A."/>
            <person name="Geisler R."/>
            <person name="Plasterk R.H."/>
            <person name="Lee C."/>
            <person name="Westerfield M."/>
            <person name="de Jong P.J."/>
            <person name="Zon L.I."/>
            <person name="Postlethwait J.H."/>
            <person name="Nusslein-Volhard C."/>
            <person name="Hubbard T.J."/>
            <person name="Roest Crollius H."/>
            <person name="Rogers J."/>
            <person name="Stemple D.L."/>
        </authorList>
    </citation>
    <scope>NUCLEOTIDE SEQUENCE [LARGE SCALE GENOMIC DNA]</scope>
    <source>
        <strain>Tuebingen</strain>
    </source>
</reference>
<reference key="2">
    <citation type="journal article" date="2011" name="Am. J. Hum. Genet.">
        <title>TMEM237 is mutated in individuals with a Joubert syndrome related disorder and expands the role of the TMEM family at the ciliary transition zone.</title>
        <authorList>
            <person name="Huang L."/>
            <person name="Szymanska K."/>
            <person name="Jensen V.L."/>
            <person name="Janecke A.R."/>
            <person name="Innes A.M."/>
            <person name="Davis E.E."/>
            <person name="Frosk P."/>
            <person name="Li C."/>
            <person name="Willer J.R."/>
            <person name="Chodirker B.N."/>
            <person name="Greenberg C.R."/>
            <person name="McLeod D.R."/>
            <person name="Bernier F.P."/>
            <person name="Chudley A.E."/>
            <person name="Muller T."/>
            <person name="Shboul M."/>
            <person name="Logan C.V."/>
            <person name="Loucks C.M."/>
            <person name="Beaulieu C.L."/>
            <person name="Bowie R.V."/>
            <person name="Bell S.M."/>
            <person name="Adkins J."/>
            <person name="Zuniga F.I."/>
            <person name="Ross K.D."/>
            <person name="Wang J."/>
            <person name="Ban M.R."/>
            <person name="Becker C."/>
            <person name="Nurnberg P."/>
            <person name="Douglas S."/>
            <person name="Craft C.M."/>
            <person name="Akimenko M.A."/>
            <person name="Hegele R.A."/>
            <person name="Ober C."/>
            <person name="Utermann G."/>
            <person name="Bolz H.J."/>
            <person name="Bulman D.E."/>
            <person name="Katsanis N."/>
            <person name="Blacque O.E."/>
            <person name="Doherty D."/>
            <person name="Parboosingh J.S."/>
            <person name="Leroux M.R."/>
            <person name="Johnson C.A."/>
            <person name="Boycott K.M."/>
        </authorList>
    </citation>
    <scope>FUNCTION</scope>
    <scope>DISRUPTION PHENOTYPE</scope>
</reference>
<feature type="chain" id="PRO_0000415831" description="Transmembrane protein 237A">
    <location>
        <begin position="1"/>
        <end position="377"/>
    </location>
</feature>
<feature type="transmembrane region" description="Helical" evidence="2">
    <location>
        <begin position="198"/>
        <end position="218"/>
    </location>
</feature>
<feature type="transmembrane region" description="Helical" evidence="2">
    <location>
        <begin position="239"/>
        <end position="259"/>
    </location>
</feature>
<feature type="transmembrane region" description="Helical" evidence="2">
    <location>
        <begin position="273"/>
        <end position="293"/>
    </location>
</feature>
<feature type="transmembrane region" description="Helical" evidence="2">
    <location>
        <begin position="326"/>
        <end position="346"/>
    </location>
</feature>
<feature type="region of interest" description="Disordered" evidence="3">
    <location>
        <begin position="1"/>
        <end position="124"/>
    </location>
</feature>
<feature type="compositionally biased region" description="Basic and acidic residues" evidence="3">
    <location>
        <begin position="1"/>
        <end position="11"/>
    </location>
</feature>
<feature type="compositionally biased region" description="Basic and acidic residues" evidence="3">
    <location>
        <begin position="43"/>
        <end position="64"/>
    </location>
</feature>
<feature type="compositionally biased region" description="Basic and acidic residues" evidence="3">
    <location>
        <begin position="74"/>
        <end position="87"/>
    </location>
</feature>
<name>T237A_DANRE</name>